<gene>
    <name evidence="1" type="primary">hutU</name>
    <name type="ordered locus">VC0395_A0823</name>
    <name type="ordered locus">VC395_1322</name>
</gene>
<dbReference type="EC" id="4.2.1.49" evidence="1"/>
<dbReference type="EMBL" id="CP000627">
    <property type="protein sequence ID" value="ABQ21752.1"/>
    <property type="molecule type" value="Genomic_DNA"/>
</dbReference>
<dbReference type="EMBL" id="CP001235">
    <property type="protein sequence ID" value="ACP09330.1"/>
    <property type="molecule type" value="Genomic_DNA"/>
</dbReference>
<dbReference type="RefSeq" id="WP_000194594.1">
    <property type="nucleotide sequence ID" value="NZ_JAACZH010000002.1"/>
</dbReference>
<dbReference type="SMR" id="A5F1X6"/>
<dbReference type="KEGG" id="vco:VC0395_A0823"/>
<dbReference type="KEGG" id="vcr:VC395_1322"/>
<dbReference type="PATRIC" id="fig|345073.21.peg.1286"/>
<dbReference type="eggNOG" id="COG2987">
    <property type="taxonomic scope" value="Bacteria"/>
</dbReference>
<dbReference type="HOGENOM" id="CLU_018868_0_1_6"/>
<dbReference type="OrthoDB" id="9764874at2"/>
<dbReference type="UniPathway" id="UPA00379">
    <property type="reaction ID" value="UER00550"/>
</dbReference>
<dbReference type="Proteomes" id="UP000000249">
    <property type="component" value="Chromosome 2"/>
</dbReference>
<dbReference type="GO" id="GO:0005737">
    <property type="term" value="C:cytoplasm"/>
    <property type="evidence" value="ECO:0007669"/>
    <property type="project" value="UniProtKB-SubCell"/>
</dbReference>
<dbReference type="GO" id="GO:0016153">
    <property type="term" value="F:urocanate hydratase activity"/>
    <property type="evidence" value="ECO:0007669"/>
    <property type="project" value="UniProtKB-UniRule"/>
</dbReference>
<dbReference type="GO" id="GO:0019556">
    <property type="term" value="P:L-histidine catabolic process to glutamate and formamide"/>
    <property type="evidence" value="ECO:0007669"/>
    <property type="project" value="UniProtKB-UniPathway"/>
</dbReference>
<dbReference type="GO" id="GO:0019557">
    <property type="term" value="P:L-histidine catabolic process to glutamate and formate"/>
    <property type="evidence" value="ECO:0007669"/>
    <property type="project" value="UniProtKB-UniPathway"/>
</dbReference>
<dbReference type="FunFam" id="3.40.50.10730:FF:000001">
    <property type="entry name" value="Urocanate hydratase"/>
    <property type="match status" value="1"/>
</dbReference>
<dbReference type="Gene3D" id="3.40.50.10730">
    <property type="entry name" value="Urocanase like domains"/>
    <property type="match status" value="1"/>
</dbReference>
<dbReference type="Gene3D" id="3.40.1770.10">
    <property type="entry name" value="Urocanase superfamily"/>
    <property type="match status" value="1"/>
</dbReference>
<dbReference type="HAMAP" id="MF_00577">
    <property type="entry name" value="HutU"/>
    <property type="match status" value="1"/>
</dbReference>
<dbReference type="InterPro" id="IPR055351">
    <property type="entry name" value="Urocanase"/>
</dbReference>
<dbReference type="InterPro" id="IPR023637">
    <property type="entry name" value="Urocanase-like"/>
</dbReference>
<dbReference type="InterPro" id="IPR035401">
    <property type="entry name" value="Urocanase_C"/>
</dbReference>
<dbReference type="InterPro" id="IPR038364">
    <property type="entry name" value="Urocanase_central_sf"/>
</dbReference>
<dbReference type="InterPro" id="IPR023636">
    <property type="entry name" value="Urocanase_CS"/>
</dbReference>
<dbReference type="InterPro" id="IPR035400">
    <property type="entry name" value="Urocanase_N"/>
</dbReference>
<dbReference type="InterPro" id="IPR035085">
    <property type="entry name" value="Urocanase_Rossmann-like"/>
</dbReference>
<dbReference type="InterPro" id="IPR036190">
    <property type="entry name" value="Urocanase_sf"/>
</dbReference>
<dbReference type="NCBIfam" id="TIGR01228">
    <property type="entry name" value="hutU"/>
    <property type="match status" value="1"/>
</dbReference>
<dbReference type="NCBIfam" id="NF003820">
    <property type="entry name" value="PRK05414.1"/>
    <property type="match status" value="1"/>
</dbReference>
<dbReference type="PANTHER" id="PTHR12216">
    <property type="entry name" value="UROCANATE HYDRATASE"/>
    <property type="match status" value="1"/>
</dbReference>
<dbReference type="PANTHER" id="PTHR12216:SF4">
    <property type="entry name" value="UROCANATE HYDRATASE"/>
    <property type="match status" value="1"/>
</dbReference>
<dbReference type="Pfam" id="PF01175">
    <property type="entry name" value="Urocanase"/>
    <property type="match status" value="1"/>
</dbReference>
<dbReference type="Pfam" id="PF17392">
    <property type="entry name" value="Urocanase_C"/>
    <property type="match status" value="1"/>
</dbReference>
<dbReference type="Pfam" id="PF17391">
    <property type="entry name" value="Urocanase_N"/>
    <property type="match status" value="1"/>
</dbReference>
<dbReference type="PIRSF" id="PIRSF001423">
    <property type="entry name" value="Urocanate_hydrat"/>
    <property type="match status" value="1"/>
</dbReference>
<dbReference type="SUPFAM" id="SSF111326">
    <property type="entry name" value="Urocanase"/>
    <property type="match status" value="1"/>
</dbReference>
<dbReference type="PROSITE" id="PS01233">
    <property type="entry name" value="UROCANASE"/>
    <property type="match status" value="1"/>
</dbReference>
<reference key="1">
    <citation type="submission" date="2007-03" db="EMBL/GenBank/DDBJ databases">
        <authorList>
            <person name="Heidelberg J."/>
        </authorList>
    </citation>
    <scope>NUCLEOTIDE SEQUENCE [LARGE SCALE GENOMIC DNA]</scope>
    <source>
        <strain>ATCC 39541 / Classical Ogawa 395 / O395</strain>
    </source>
</reference>
<reference key="2">
    <citation type="journal article" date="2008" name="PLoS ONE">
        <title>A recalibrated molecular clock and independent origins for the cholera pandemic clones.</title>
        <authorList>
            <person name="Feng L."/>
            <person name="Reeves P.R."/>
            <person name="Lan R."/>
            <person name="Ren Y."/>
            <person name="Gao C."/>
            <person name="Zhou Z."/>
            <person name="Ren Y."/>
            <person name="Cheng J."/>
            <person name="Wang W."/>
            <person name="Wang J."/>
            <person name="Qian W."/>
            <person name="Li D."/>
            <person name="Wang L."/>
        </authorList>
    </citation>
    <scope>NUCLEOTIDE SEQUENCE [LARGE SCALE GENOMIC DNA]</scope>
    <source>
        <strain>ATCC 39541 / Classical Ogawa 395 / O395</strain>
    </source>
</reference>
<sequence>MTQSSAQGTRLDTQRTIRAPRGTQLRAKSWLTEAPLRMLMNNLDPDVAEHPHALVVYGGIGRAARNWECFDKIVEVLERLEDDQTLLVQSGKPVGVFPTHKNAPRVLIANSNLVPHWANWEHFNELDKQGLMMYGQMTAGSWIYIGSQGIVQGTYETFVAVAKKHFNGDAKGRWVLTGGLGGMGGAQPLAATMAGFSMIAVECDESRIDYRLRTGYVDKKANTLDEALAMIADTDRPISVGLLGNAADIFPELVKRNITPDVVTDQTSAHDPLNGYLPLGWSMEKAAQMRQQNEAEVVKAAKASMAIQVRAMLDLQTRGAATLDYGNNIRQMALEEGVANAFDFPGFVPAYIRPLFCEGIGPFRWAALSGDPEDIYKTDQKVKELIPDNPHLHNWLDMARERIHFQGLPARICWVGLKDRARLGLAFNEMVKNGELKAPIVIGRDHLDSGSVASPNRETEGMLDGSDAVSDWPLLNALLNTAGGATWVSLHHGGGVGMGFSQHSGMVICCDGSDDAAERIARVLHNDPATGVMRHADAGYEIAKRCAQQQKLDLPMLNAELAKLK</sequence>
<feature type="chain" id="PRO_1000072581" description="Urocanate hydratase">
    <location>
        <begin position="1"/>
        <end position="565"/>
    </location>
</feature>
<feature type="active site" evidence="1">
    <location>
        <position position="413"/>
    </location>
</feature>
<feature type="binding site" evidence="1">
    <location>
        <begin position="58"/>
        <end position="59"/>
    </location>
    <ligand>
        <name>NAD(+)</name>
        <dbReference type="ChEBI" id="CHEBI:57540"/>
    </ligand>
</feature>
<feature type="binding site" evidence="1">
    <location>
        <position position="136"/>
    </location>
    <ligand>
        <name>NAD(+)</name>
        <dbReference type="ChEBI" id="CHEBI:57540"/>
    </ligand>
</feature>
<feature type="binding site" evidence="1">
    <location>
        <begin position="182"/>
        <end position="184"/>
    </location>
    <ligand>
        <name>NAD(+)</name>
        <dbReference type="ChEBI" id="CHEBI:57540"/>
    </ligand>
</feature>
<feature type="binding site" evidence="1">
    <location>
        <position position="202"/>
    </location>
    <ligand>
        <name>NAD(+)</name>
        <dbReference type="ChEBI" id="CHEBI:57540"/>
    </ligand>
</feature>
<feature type="binding site" evidence="1">
    <location>
        <position position="207"/>
    </location>
    <ligand>
        <name>NAD(+)</name>
        <dbReference type="ChEBI" id="CHEBI:57540"/>
    </ligand>
</feature>
<feature type="binding site" evidence="1">
    <location>
        <begin position="245"/>
        <end position="246"/>
    </location>
    <ligand>
        <name>NAD(+)</name>
        <dbReference type="ChEBI" id="CHEBI:57540"/>
    </ligand>
</feature>
<feature type="binding site" evidence="1">
    <location>
        <begin position="266"/>
        <end position="270"/>
    </location>
    <ligand>
        <name>NAD(+)</name>
        <dbReference type="ChEBI" id="CHEBI:57540"/>
    </ligand>
</feature>
<feature type="binding site" evidence="1">
    <location>
        <begin position="276"/>
        <end position="277"/>
    </location>
    <ligand>
        <name>NAD(+)</name>
        <dbReference type="ChEBI" id="CHEBI:57540"/>
    </ligand>
</feature>
<feature type="binding site" evidence="1">
    <location>
        <position position="325"/>
    </location>
    <ligand>
        <name>NAD(+)</name>
        <dbReference type="ChEBI" id="CHEBI:57540"/>
    </ligand>
</feature>
<feature type="binding site" evidence="1">
    <location>
        <position position="495"/>
    </location>
    <ligand>
        <name>NAD(+)</name>
        <dbReference type="ChEBI" id="CHEBI:57540"/>
    </ligand>
</feature>
<comment type="function">
    <text evidence="1">Catalyzes the conversion of urocanate to 4-imidazolone-5-propionate.</text>
</comment>
<comment type="catalytic activity">
    <reaction evidence="1">
        <text>4-imidazolone-5-propanoate = trans-urocanate + H2O</text>
        <dbReference type="Rhea" id="RHEA:13101"/>
        <dbReference type="ChEBI" id="CHEBI:15377"/>
        <dbReference type="ChEBI" id="CHEBI:17771"/>
        <dbReference type="ChEBI" id="CHEBI:77893"/>
        <dbReference type="EC" id="4.2.1.49"/>
    </reaction>
</comment>
<comment type="cofactor">
    <cofactor evidence="1">
        <name>NAD(+)</name>
        <dbReference type="ChEBI" id="CHEBI:57540"/>
    </cofactor>
    <text evidence="1">Binds 1 NAD(+) per subunit.</text>
</comment>
<comment type="pathway">
    <text evidence="1">Amino-acid degradation; L-histidine degradation into L-glutamate; N-formimidoyl-L-glutamate from L-histidine: step 2/3.</text>
</comment>
<comment type="subcellular location">
    <subcellularLocation>
        <location evidence="1">Cytoplasm</location>
    </subcellularLocation>
</comment>
<comment type="similarity">
    <text evidence="1">Belongs to the urocanase family.</text>
</comment>
<organism>
    <name type="scientific">Vibrio cholerae serotype O1 (strain ATCC 39541 / Classical Ogawa 395 / O395)</name>
    <dbReference type="NCBI Taxonomy" id="345073"/>
    <lineage>
        <taxon>Bacteria</taxon>
        <taxon>Pseudomonadati</taxon>
        <taxon>Pseudomonadota</taxon>
        <taxon>Gammaproteobacteria</taxon>
        <taxon>Vibrionales</taxon>
        <taxon>Vibrionaceae</taxon>
        <taxon>Vibrio</taxon>
    </lineage>
</organism>
<protein>
    <recommendedName>
        <fullName evidence="1">Urocanate hydratase</fullName>
        <shortName evidence="1">Urocanase</shortName>
        <ecNumber evidence="1">4.2.1.49</ecNumber>
    </recommendedName>
    <alternativeName>
        <fullName evidence="1">Imidazolonepropionate hydrolase</fullName>
    </alternativeName>
</protein>
<accession>A5F1X6</accession>
<accession>C3LZW4</accession>
<name>HUTU_VIBC3</name>
<proteinExistence type="inferred from homology"/>
<evidence type="ECO:0000255" key="1">
    <source>
        <dbReference type="HAMAP-Rule" id="MF_00577"/>
    </source>
</evidence>
<keyword id="KW-0963">Cytoplasm</keyword>
<keyword id="KW-0369">Histidine metabolism</keyword>
<keyword id="KW-0456">Lyase</keyword>
<keyword id="KW-0520">NAD</keyword>